<gene>
    <name evidence="1" type="primary">anmK</name>
    <name type="ordered locus">mll7241</name>
</gene>
<organism>
    <name type="scientific">Mesorhizobium japonicum (strain LMG 29417 / CECT 9101 / MAFF 303099)</name>
    <name type="common">Mesorhizobium loti (strain MAFF 303099)</name>
    <dbReference type="NCBI Taxonomy" id="266835"/>
    <lineage>
        <taxon>Bacteria</taxon>
        <taxon>Pseudomonadati</taxon>
        <taxon>Pseudomonadota</taxon>
        <taxon>Alphaproteobacteria</taxon>
        <taxon>Hyphomicrobiales</taxon>
        <taxon>Phyllobacteriaceae</taxon>
        <taxon>Mesorhizobium</taxon>
    </lineage>
</organism>
<proteinExistence type="inferred from homology"/>
<evidence type="ECO:0000255" key="1">
    <source>
        <dbReference type="HAMAP-Rule" id="MF_01270"/>
    </source>
</evidence>
<name>ANMK_RHILO</name>
<protein>
    <recommendedName>
        <fullName evidence="1">Anhydro-N-acetylmuramic acid kinase</fullName>
        <ecNumber evidence="1">2.7.1.170</ecNumber>
    </recommendedName>
    <alternativeName>
        <fullName evidence="1">AnhMurNAc kinase</fullName>
    </alternativeName>
</protein>
<keyword id="KW-0067">ATP-binding</keyword>
<keyword id="KW-0119">Carbohydrate metabolism</keyword>
<keyword id="KW-0418">Kinase</keyword>
<keyword id="KW-0547">Nucleotide-binding</keyword>
<keyword id="KW-0808">Transferase</keyword>
<reference key="1">
    <citation type="journal article" date="2000" name="DNA Res.">
        <title>Complete genome structure of the nitrogen-fixing symbiotic bacterium Mesorhizobium loti.</title>
        <authorList>
            <person name="Kaneko T."/>
            <person name="Nakamura Y."/>
            <person name="Sato S."/>
            <person name="Asamizu E."/>
            <person name="Kato T."/>
            <person name="Sasamoto S."/>
            <person name="Watanabe A."/>
            <person name="Idesawa K."/>
            <person name="Ishikawa A."/>
            <person name="Kawashima K."/>
            <person name="Kimura T."/>
            <person name="Kishida Y."/>
            <person name="Kiyokawa C."/>
            <person name="Kohara M."/>
            <person name="Matsumoto M."/>
            <person name="Matsuno A."/>
            <person name="Mochizuki Y."/>
            <person name="Nakayama S."/>
            <person name="Nakazaki N."/>
            <person name="Shimpo S."/>
            <person name="Sugimoto M."/>
            <person name="Takeuchi C."/>
            <person name="Yamada M."/>
            <person name="Tabata S."/>
        </authorList>
    </citation>
    <scope>NUCLEOTIDE SEQUENCE [LARGE SCALE GENOMIC DNA]</scope>
    <source>
        <strain>LMG 29417 / CECT 9101 / MAFF 303099</strain>
    </source>
</reference>
<feature type="chain" id="PRO_0000250042" description="Anhydro-N-acetylmuramic acid kinase">
    <location>
        <begin position="1"/>
        <end position="371"/>
    </location>
</feature>
<feature type="binding site" evidence="1">
    <location>
        <begin position="12"/>
        <end position="20"/>
    </location>
    <ligand>
        <name>ATP</name>
        <dbReference type="ChEBI" id="CHEBI:30616"/>
    </ligand>
</feature>
<comment type="function">
    <text evidence="1">Catalyzes the specific phosphorylation of 1,6-anhydro-N-acetylmuramic acid (anhMurNAc) with the simultaneous cleavage of the 1,6-anhydro ring, generating MurNAc-6-P. Is required for the utilization of anhMurNAc either imported from the medium or derived from its own cell wall murein, and thus plays a role in cell wall recycling.</text>
</comment>
<comment type="catalytic activity">
    <reaction evidence="1">
        <text>1,6-anhydro-N-acetyl-beta-muramate + ATP + H2O = N-acetyl-D-muramate 6-phosphate + ADP + H(+)</text>
        <dbReference type="Rhea" id="RHEA:24952"/>
        <dbReference type="ChEBI" id="CHEBI:15377"/>
        <dbReference type="ChEBI" id="CHEBI:15378"/>
        <dbReference type="ChEBI" id="CHEBI:30616"/>
        <dbReference type="ChEBI" id="CHEBI:58690"/>
        <dbReference type="ChEBI" id="CHEBI:58722"/>
        <dbReference type="ChEBI" id="CHEBI:456216"/>
        <dbReference type="EC" id="2.7.1.170"/>
    </reaction>
</comment>
<comment type="pathway">
    <text evidence="1">Amino-sugar metabolism; 1,6-anhydro-N-acetylmuramate degradation.</text>
</comment>
<comment type="pathway">
    <text evidence="1">Cell wall biogenesis; peptidoglycan recycling.</text>
</comment>
<comment type="similarity">
    <text evidence="1">Belongs to the anhydro-N-acetylmuramic acid kinase family.</text>
</comment>
<sequence length="371" mass="39071">MEPIWAVGLMTGTVLDGNIDVALIKTDGERIDDFGTYRLMPYPQSIRSLLEETLTAARAWNFVGPEPAIFRKAEEALTRAQSAAVKELVEGYGMTMADIGVVGFHGQTVLHRAPQVGRLGQTRQLGDGELMHSLLSTKVAYDFRSADMRAGGQGAPLAAAYHTALMRSAGASGEVAVLNLGGVANITWWDGADNVVAFDTGPANAPLNDFIKSKGLGDMDRDGALGRAGTVDEARLAKLLQHPYLTKPYPKSLDRFDFGAAMADGLNAEDGAALLTAFTAGAVGKALDLLPTRPKKLVVSGGGRHNPTMMAMLASRAGVEVVQAESLGWSGDAVEAECFAFLAVRVLRGMPISFPSTTGAPQPMRGGKLAG</sequence>
<accession>Q986R4</accession>
<dbReference type="EC" id="2.7.1.170" evidence="1"/>
<dbReference type="EMBL" id="BA000012">
    <property type="protein sequence ID" value="BAB53389.1"/>
    <property type="molecule type" value="Genomic_DNA"/>
</dbReference>
<dbReference type="RefSeq" id="WP_010914696.1">
    <property type="nucleotide sequence ID" value="NC_002678.2"/>
</dbReference>
<dbReference type="SMR" id="Q986R4"/>
<dbReference type="KEGG" id="mlo:mll7241"/>
<dbReference type="PATRIC" id="fig|266835.9.peg.5784"/>
<dbReference type="eggNOG" id="COG2377">
    <property type="taxonomic scope" value="Bacteria"/>
</dbReference>
<dbReference type="HOGENOM" id="CLU_038782_3_0_5"/>
<dbReference type="UniPathway" id="UPA00343"/>
<dbReference type="UniPathway" id="UPA00544"/>
<dbReference type="Proteomes" id="UP000000552">
    <property type="component" value="Chromosome"/>
</dbReference>
<dbReference type="GO" id="GO:0005524">
    <property type="term" value="F:ATP binding"/>
    <property type="evidence" value="ECO:0007669"/>
    <property type="project" value="UniProtKB-UniRule"/>
</dbReference>
<dbReference type="GO" id="GO:0016301">
    <property type="term" value="F:kinase activity"/>
    <property type="evidence" value="ECO:0007669"/>
    <property type="project" value="UniProtKB-KW"/>
</dbReference>
<dbReference type="GO" id="GO:0016773">
    <property type="term" value="F:phosphotransferase activity, alcohol group as acceptor"/>
    <property type="evidence" value="ECO:0007669"/>
    <property type="project" value="UniProtKB-UniRule"/>
</dbReference>
<dbReference type="GO" id="GO:0097175">
    <property type="term" value="P:1,6-anhydro-N-acetyl-beta-muramic acid catabolic process"/>
    <property type="evidence" value="ECO:0007669"/>
    <property type="project" value="UniProtKB-UniRule"/>
</dbReference>
<dbReference type="GO" id="GO:0006040">
    <property type="term" value="P:amino sugar metabolic process"/>
    <property type="evidence" value="ECO:0007669"/>
    <property type="project" value="InterPro"/>
</dbReference>
<dbReference type="GO" id="GO:0009254">
    <property type="term" value="P:peptidoglycan turnover"/>
    <property type="evidence" value="ECO:0007669"/>
    <property type="project" value="UniProtKB-UniRule"/>
</dbReference>
<dbReference type="Gene3D" id="3.30.420.40">
    <property type="match status" value="2"/>
</dbReference>
<dbReference type="HAMAP" id="MF_01270">
    <property type="entry name" value="AnhMurNAc_kinase"/>
    <property type="match status" value="1"/>
</dbReference>
<dbReference type="InterPro" id="IPR005338">
    <property type="entry name" value="Anhydro_N_Ac-Mur_kinase"/>
</dbReference>
<dbReference type="InterPro" id="IPR043129">
    <property type="entry name" value="ATPase_NBD"/>
</dbReference>
<dbReference type="NCBIfam" id="NF007141">
    <property type="entry name" value="PRK09585.1-5"/>
    <property type="match status" value="1"/>
</dbReference>
<dbReference type="PANTHER" id="PTHR30605">
    <property type="entry name" value="ANHYDRO-N-ACETYLMURAMIC ACID KINASE"/>
    <property type="match status" value="1"/>
</dbReference>
<dbReference type="PANTHER" id="PTHR30605:SF0">
    <property type="entry name" value="ANHYDRO-N-ACETYLMURAMIC ACID KINASE"/>
    <property type="match status" value="1"/>
</dbReference>
<dbReference type="Pfam" id="PF03702">
    <property type="entry name" value="AnmK"/>
    <property type="match status" value="1"/>
</dbReference>
<dbReference type="SUPFAM" id="SSF53067">
    <property type="entry name" value="Actin-like ATPase domain"/>
    <property type="match status" value="1"/>
</dbReference>